<name>COFH2_METBF</name>
<proteinExistence type="inferred from homology"/>
<sequence length="384" mass="42190">MYTKKPTIPEDVIERAYRGKCTKEDALLLLEGNPFELFELANDLRASTVGDAVSYVVNRNIYITNKCVGNCGFCAYRTEKGYILSVEEILEKAGEARKAGAVEVCIQGGYIPEADIEFYLEIIESVKAEFPDLCIHALSPMEVNYAAGLSGMSVEEALHRLKKSGLDSLTGTSAEILSDRVRKIICPGKINTQQWIDTITAAHKAGISTNSTIMYGHVETLEERLDHVFIIREIQKETGGFTELIPMAFLPYNNPIGEKMIASGKFSTTGLEDLQLIAISRVILHTYVKNIQATWVKLGKKLAQVALQCGANDLGGTLMEDQISTASGGSNGEYVSPAEFEWMIKGAGRTPMQRDTLYRKVEPVIANRVEPLPGLGKTKIGSRD</sequence>
<organism>
    <name type="scientific">Methanosarcina barkeri (strain Fusaro / DSM 804)</name>
    <dbReference type="NCBI Taxonomy" id="269797"/>
    <lineage>
        <taxon>Archaea</taxon>
        <taxon>Methanobacteriati</taxon>
        <taxon>Methanobacteriota</taxon>
        <taxon>Stenosarchaea group</taxon>
        <taxon>Methanomicrobia</taxon>
        <taxon>Methanosarcinales</taxon>
        <taxon>Methanosarcinaceae</taxon>
        <taxon>Methanosarcina</taxon>
    </lineage>
</organism>
<protein>
    <recommendedName>
        <fullName evidence="1">5-amino-6-(D-ribitylamino)uracil--L-tyrosine 4-hydroxyphenyl transferase 2</fullName>
        <ecNumber evidence="1">2.5.1.147</ecNumber>
    </recommendedName>
    <alternativeName>
        <fullName evidence="1">FO synthase subunit 2 2</fullName>
    </alternativeName>
</protein>
<feature type="chain" id="PRO_0000323518" description="5-amino-6-(D-ribitylamino)uracil--L-tyrosine 4-hydroxyphenyl transferase 2">
    <location>
        <begin position="1"/>
        <end position="384"/>
    </location>
</feature>
<feature type="domain" description="Radical SAM core" evidence="2">
    <location>
        <begin position="53"/>
        <end position="286"/>
    </location>
</feature>
<feature type="binding site" evidence="1">
    <location>
        <position position="67"/>
    </location>
    <ligand>
        <name>[4Fe-4S] cluster</name>
        <dbReference type="ChEBI" id="CHEBI:49883"/>
        <note>4Fe-4S-S-AdoMet</note>
    </ligand>
</feature>
<feature type="binding site" evidence="1">
    <location>
        <position position="71"/>
    </location>
    <ligand>
        <name>[4Fe-4S] cluster</name>
        <dbReference type="ChEBI" id="CHEBI:49883"/>
        <note>4Fe-4S-S-AdoMet</note>
    </ligand>
</feature>
<feature type="binding site" evidence="1">
    <location>
        <position position="74"/>
    </location>
    <ligand>
        <name>[4Fe-4S] cluster</name>
        <dbReference type="ChEBI" id="CHEBI:49883"/>
        <note>4Fe-4S-S-AdoMet</note>
    </ligand>
</feature>
<accession>Q466A2</accession>
<keyword id="KW-0004">4Fe-4S</keyword>
<keyword id="KW-0408">Iron</keyword>
<keyword id="KW-0411">Iron-sulfur</keyword>
<keyword id="KW-0479">Metal-binding</keyword>
<keyword id="KW-0949">S-adenosyl-L-methionine</keyword>
<keyword id="KW-0808">Transferase</keyword>
<evidence type="ECO:0000255" key="1">
    <source>
        <dbReference type="HAMAP-Rule" id="MF_01612"/>
    </source>
</evidence>
<evidence type="ECO:0000255" key="2">
    <source>
        <dbReference type="PROSITE-ProRule" id="PRU01266"/>
    </source>
</evidence>
<comment type="function">
    <text evidence="1">Catalyzes the radical-mediated synthesis of 5-amino-5-(4-hydroxybenzyl)-6-(D-ribitylimino)-5,6-dihydrouracil from 5-amino-6-(D-ribitylamino)uracil and L-tyrosine.</text>
</comment>
<comment type="catalytic activity">
    <reaction evidence="1">
        <text>5-amino-6-(D-ribitylamino)uracil + L-tyrosine + S-adenosyl-L-methionine = 5-amino-5-(4-hydroxybenzyl)-6-(D-ribitylimino)-5,6-dihydrouracil + 2-iminoacetate + 5'-deoxyadenosine + L-methionine + H(+)</text>
        <dbReference type="Rhea" id="RHEA:55200"/>
        <dbReference type="ChEBI" id="CHEBI:15378"/>
        <dbReference type="ChEBI" id="CHEBI:15934"/>
        <dbReference type="ChEBI" id="CHEBI:17319"/>
        <dbReference type="ChEBI" id="CHEBI:57844"/>
        <dbReference type="ChEBI" id="CHEBI:58315"/>
        <dbReference type="ChEBI" id="CHEBI:59789"/>
        <dbReference type="ChEBI" id="CHEBI:77846"/>
        <dbReference type="ChEBI" id="CHEBI:85936"/>
        <dbReference type="EC" id="2.5.1.147"/>
    </reaction>
</comment>
<comment type="cofactor">
    <cofactor evidence="1">
        <name>[4Fe-4S] cluster</name>
        <dbReference type="ChEBI" id="CHEBI:49883"/>
    </cofactor>
    <text evidence="1">Binds 1 [4Fe-4S] cluster. The cluster is coordinated with 3 cysteines and an exchangeable S-adenosyl-L-methionine.</text>
</comment>
<comment type="pathway">
    <text evidence="1">Cofactor biosynthesis; coenzyme F0 biosynthesis.</text>
</comment>
<comment type="subunit">
    <text evidence="1">Consists of two subunits, CofG and CofH.</text>
</comment>
<comment type="similarity">
    <text evidence="1">Belongs to the radical SAM superfamily. CofH family.</text>
</comment>
<reference key="1">
    <citation type="journal article" date="2006" name="J. Bacteriol.">
        <title>The Methanosarcina barkeri genome: comparative analysis with Methanosarcina acetivorans and Methanosarcina mazei reveals extensive rearrangement within methanosarcinal genomes.</title>
        <authorList>
            <person name="Maeder D.L."/>
            <person name="Anderson I."/>
            <person name="Brettin T.S."/>
            <person name="Bruce D.C."/>
            <person name="Gilna P."/>
            <person name="Han C.S."/>
            <person name="Lapidus A."/>
            <person name="Metcalf W.W."/>
            <person name="Saunders E."/>
            <person name="Tapia R."/>
            <person name="Sowers K.R."/>
        </authorList>
    </citation>
    <scope>NUCLEOTIDE SEQUENCE [LARGE SCALE GENOMIC DNA]</scope>
    <source>
        <strain>Fusaro / DSM 804</strain>
    </source>
</reference>
<dbReference type="EC" id="2.5.1.147" evidence="1"/>
<dbReference type="EMBL" id="CP000099">
    <property type="protein sequence ID" value="AAZ72290.1"/>
    <property type="molecule type" value="Genomic_DNA"/>
</dbReference>
<dbReference type="SMR" id="Q466A2"/>
<dbReference type="STRING" id="269797.Mbar_A3417"/>
<dbReference type="PaxDb" id="269797-Mbar_A3417"/>
<dbReference type="KEGG" id="mba:Mbar_A3417"/>
<dbReference type="eggNOG" id="arCOG00656">
    <property type="taxonomic scope" value="Archaea"/>
</dbReference>
<dbReference type="HOGENOM" id="CLU_040406_1_0_2"/>
<dbReference type="OrthoDB" id="8186at2157"/>
<dbReference type="UniPathway" id="UPA00072"/>
<dbReference type="GO" id="GO:0051539">
    <property type="term" value="F:4 iron, 4 sulfur cluster binding"/>
    <property type="evidence" value="ECO:0007669"/>
    <property type="project" value="UniProtKB-KW"/>
</dbReference>
<dbReference type="GO" id="GO:0141093">
    <property type="term" value="F:5-amino-6-(D-ribitylamino)uracil--L-tyrosine 4-hydroxyphenyl transferase activity"/>
    <property type="evidence" value="ECO:0007669"/>
    <property type="project" value="UniProtKB-EC"/>
</dbReference>
<dbReference type="GO" id="GO:0044689">
    <property type="term" value="F:7,8-didemethyl-8-hydroxy-5-deazariboflavin synthase activity"/>
    <property type="evidence" value="ECO:0007669"/>
    <property type="project" value="TreeGrafter"/>
</dbReference>
<dbReference type="GO" id="GO:0005506">
    <property type="term" value="F:iron ion binding"/>
    <property type="evidence" value="ECO:0007669"/>
    <property type="project" value="UniProtKB-UniRule"/>
</dbReference>
<dbReference type="CDD" id="cd01335">
    <property type="entry name" value="Radical_SAM"/>
    <property type="match status" value="1"/>
</dbReference>
<dbReference type="Gene3D" id="3.20.20.70">
    <property type="entry name" value="Aldolase class I"/>
    <property type="match status" value="1"/>
</dbReference>
<dbReference type="HAMAP" id="MF_01612">
    <property type="entry name" value="FO_synth_sub2"/>
    <property type="match status" value="1"/>
</dbReference>
<dbReference type="InterPro" id="IPR013785">
    <property type="entry name" value="Aldolase_TIM"/>
</dbReference>
<dbReference type="InterPro" id="IPR045567">
    <property type="entry name" value="CofH/MnqC-like_C"/>
</dbReference>
<dbReference type="InterPro" id="IPR019940">
    <property type="entry name" value="CofH_family"/>
</dbReference>
<dbReference type="InterPro" id="IPR006638">
    <property type="entry name" value="Elp3/MiaA/NifB-like_rSAM"/>
</dbReference>
<dbReference type="InterPro" id="IPR034405">
    <property type="entry name" value="F420"/>
</dbReference>
<dbReference type="InterPro" id="IPR020050">
    <property type="entry name" value="FO_synthase_su2"/>
</dbReference>
<dbReference type="InterPro" id="IPR007197">
    <property type="entry name" value="rSAM"/>
</dbReference>
<dbReference type="NCBIfam" id="TIGR00423">
    <property type="entry name" value="CofH family radical SAM protein"/>
    <property type="match status" value="1"/>
</dbReference>
<dbReference type="NCBIfam" id="TIGR03551">
    <property type="entry name" value="F420_cofH"/>
    <property type="match status" value="1"/>
</dbReference>
<dbReference type="NCBIfam" id="NF005609">
    <property type="entry name" value="PRK07360.1"/>
    <property type="match status" value="1"/>
</dbReference>
<dbReference type="PANTHER" id="PTHR43076">
    <property type="entry name" value="FO SYNTHASE (COFH)"/>
    <property type="match status" value="1"/>
</dbReference>
<dbReference type="PANTHER" id="PTHR43076:SF1">
    <property type="entry name" value="LIPOYL SYNTHASE 2"/>
    <property type="match status" value="1"/>
</dbReference>
<dbReference type="Pfam" id="PF19288">
    <property type="entry name" value="CofH_C"/>
    <property type="match status" value="1"/>
</dbReference>
<dbReference type="Pfam" id="PF04055">
    <property type="entry name" value="Radical_SAM"/>
    <property type="match status" value="1"/>
</dbReference>
<dbReference type="PIRSF" id="PIRSF004762">
    <property type="entry name" value="CHP00423"/>
    <property type="match status" value="1"/>
</dbReference>
<dbReference type="SFLD" id="SFLDF00293">
    <property type="entry name" value="((2_3_4_5-tetrahydroxypentyl)a"/>
    <property type="match status" value="1"/>
</dbReference>
<dbReference type="SFLD" id="SFLDG01388">
    <property type="entry name" value="7_8-didemethyl-8-hydroxy-5-dea"/>
    <property type="match status" value="1"/>
</dbReference>
<dbReference type="SFLD" id="SFLDF00343">
    <property type="entry name" value="aminofutalosine_synthase_(mqnE"/>
    <property type="match status" value="1"/>
</dbReference>
<dbReference type="SMART" id="SM00729">
    <property type="entry name" value="Elp3"/>
    <property type="match status" value="1"/>
</dbReference>
<dbReference type="SUPFAM" id="SSF102114">
    <property type="entry name" value="Radical SAM enzymes"/>
    <property type="match status" value="1"/>
</dbReference>
<dbReference type="PROSITE" id="PS51918">
    <property type="entry name" value="RADICAL_SAM"/>
    <property type="match status" value="1"/>
</dbReference>
<gene>
    <name evidence="1" type="primary">cofH2</name>
    <name type="ordered locus">Mbar_A3417</name>
</gene>